<reference key="1">
    <citation type="journal article" date="1996" name="J. Biol. Chem.">
        <title>Cloning and characterization of a specific interleukin (IL)-13 binding protein structurally related to the IL-5 receptor alpha chain.</title>
        <authorList>
            <person name="Caput D."/>
            <person name="Laurent P."/>
            <person name="Kaghad M."/>
            <person name="Lelias J.M."/>
            <person name="Lefort S."/>
            <person name="Vita N."/>
            <person name="Ferrara P."/>
        </authorList>
    </citation>
    <scope>NUCLEOTIDE SEQUENCE [MRNA]</scope>
    <source>
        <tissue>Renal cell carcinoma</tissue>
    </source>
</reference>
<reference key="2">
    <citation type="submission" date="1996-10" db="EMBL/GenBank/DDBJ databases">
        <title>Identification of a third chain for the murine Il-13 receptor.</title>
        <authorList>
            <person name="Donaldson D.D."/>
            <person name="Whitters M.J."/>
            <person name="Fitz L."/>
            <person name="Neben T."/>
            <person name="Finnerty H."/>
            <person name="Henderson S.L."/>
            <person name="O'Hara R.M. Jr."/>
            <person name="Turner K.J."/>
            <person name="Wood C.R."/>
            <person name="Collins M."/>
        </authorList>
    </citation>
    <scope>NUCLEOTIDE SEQUENCE [MRNA]</scope>
    <source>
        <tissue>Testis</tissue>
    </source>
</reference>
<reference key="3">
    <citation type="journal article" date="1997" name="Genomics">
        <title>Chromosome mapping and expression of the human interleukin-13 receptor.</title>
        <authorList>
            <person name="Guo J."/>
            <person name="Apiou F."/>
            <person name="Mellerin M.P."/>
            <person name="Lebeau B."/>
            <person name="Jacques Y."/>
            <person name="Minvielle S."/>
        </authorList>
    </citation>
    <scope>NUCLEOTIDE SEQUENCE [MRNA]</scope>
    <source>
        <tissue>Brain</tissue>
    </source>
</reference>
<reference key="4">
    <citation type="journal article" date="2004" name="Nat. Genet.">
        <title>Complete sequencing and characterization of 21,243 full-length human cDNAs.</title>
        <authorList>
            <person name="Ota T."/>
            <person name="Suzuki Y."/>
            <person name="Nishikawa T."/>
            <person name="Otsuki T."/>
            <person name="Sugiyama T."/>
            <person name="Irie R."/>
            <person name="Wakamatsu A."/>
            <person name="Hayashi K."/>
            <person name="Sato H."/>
            <person name="Nagai K."/>
            <person name="Kimura K."/>
            <person name="Makita H."/>
            <person name="Sekine M."/>
            <person name="Obayashi M."/>
            <person name="Nishi T."/>
            <person name="Shibahara T."/>
            <person name="Tanaka T."/>
            <person name="Ishii S."/>
            <person name="Yamamoto J."/>
            <person name="Saito K."/>
            <person name="Kawai Y."/>
            <person name="Isono Y."/>
            <person name="Nakamura Y."/>
            <person name="Nagahari K."/>
            <person name="Murakami K."/>
            <person name="Yasuda T."/>
            <person name="Iwayanagi T."/>
            <person name="Wagatsuma M."/>
            <person name="Shiratori A."/>
            <person name="Sudo H."/>
            <person name="Hosoiri T."/>
            <person name="Kaku Y."/>
            <person name="Kodaira H."/>
            <person name="Kondo H."/>
            <person name="Sugawara M."/>
            <person name="Takahashi M."/>
            <person name="Kanda K."/>
            <person name="Yokoi T."/>
            <person name="Furuya T."/>
            <person name="Kikkawa E."/>
            <person name="Omura Y."/>
            <person name="Abe K."/>
            <person name="Kamihara K."/>
            <person name="Katsuta N."/>
            <person name="Sato K."/>
            <person name="Tanikawa M."/>
            <person name="Yamazaki M."/>
            <person name="Ninomiya K."/>
            <person name="Ishibashi T."/>
            <person name="Yamashita H."/>
            <person name="Murakawa K."/>
            <person name="Fujimori K."/>
            <person name="Tanai H."/>
            <person name="Kimata M."/>
            <person name="Watanabe M."/>
            <person name="Hiraoka S."/>
            <person name="Chiba Y."/>
            <person name="Ishida S."/>
            <person name="Ono Y."/>
            <person name="Takiguchi S."/>
            <person name="Watanabe S."/>
            <person name="Yosida M."/>
            <person name="Hotuta T."/>
            <person name="Kusano J."/>
            <person name="Kanehori K."/>
            <person name="Takahashi-Fujii A."/>
            <person name="Hara H."/>
            <person name="Tanase T.-O."/>
            <person name="Nomura Y."/>
            <person name="Togiya S."/>
            <person name="Komai F."/>
            <person name="Hara R."/>
            <person name="Takeuchi K."/>
            <person name="Arita M."/>
            <person name="Imose N."/>
            <person name="Musashino K."/>
            <person name="Yuuki H."/>
            <person name="Oshima A."/>
            <person name="Sasaki N."/>
            <person name="Aotsuka S."/>
            <person name="Yoshikawa Y."/>
            <person name="Matsunawa H."/>
            <person name="Ichihara T."/>
            <person name="Shiohata N."/>
            <person name="Sano S."/>
            <person name="Moriya S."/>
            <person name="Momiyama H."/>
            <person name="Satoh N."/>
            <person name="Takami S."/>
            <person name="Terashima Y."/>
            <person name="Suzuki O."/>
            <person name="Nakagawa S."/>
            <person name="Senoh A."/>
            <person name="Mizoguchi H."/>
            <person name="Goto Y."/>
            <person name="Shimizu F."/>
            <person name="Wakebe H."/>
            <person name="Hishigaki H."/>
            <person name="Watanabe T."/>
            <person name="Sugiyama A."/>
            <person name="Takemoto M."/>
            <person name="Kawakami B."/>
            <person name="Yamazaki M."/>
            <person name="Watanabe K."/>
            <person name="Kumagai A."/>
            <person name="Itakura S."/>
            <person name="Fukuzumi Y."/>
            <person name="Fujimori Y."/>
            <person name="Komiyama M."/>
            <person name="Tashiro H."/>
            <person name="Tanigami A."/>
            <person name="Fujiwara T."/>
            <person name="Ono T."/>
            <person name="Yamada K."/>
            <person name="Fujii Y."/>
            <person name="Ozaki K."/>
            <person name="Hirao M."/>
            <person name="Ohmori Y."/>
            <person name="Kawabata A."/>
            <person name="Hikiji T."/>
            <person name="Kobatake N."/>
            <person name="Inagaki H."/>
            <person name="Ikema Y."/>
            <person name="Okamoto S."/>
            <person name="Okitani R."/>
            <person name="Kawakami T."/>
            <person name="Noguchi S."/>
            <person name="Itoh T."/>
            <person name="Shigeta K."/>
            <person name="Senba T."/>
            <person name="Matsumura K."/>
            <person name="Nakajima Y."/>
            <person name="Mizuno T."/>
            <person name="Morinaga M."/>
            <person name="Sasaki M."/>
            <person name="Togashi T."/>
            <person name="Oyama M."/>
            <person name="Hata H."/>
            <person name="Watanabe M."/>
            <person name="Komatsu T."/>
            <person name="Mizushima-Sugano J."/>
            <person name="Satoh T."/>
            <person name="Shirai Y."/>
            <person name="Takahashi Y."/>
            <person name="Nakagawa K."/>
            <person name="Okumura K."/>
            <person name="Nagase T."/>
            <person name="Nomura N."/>
            <person name="Kikuchi H."/>
            <person name="Masuho Y."/>
            <person name="Yamashita R."/>
            <person name="Nakai K."/>
            <person name="Yada T."/>
            <person name="Nakamura Y."/>
            <person name="Ohara O."/>
            <person name="Isogai T."/>
            <person name="Sugano S."/>
        </authorList>
    </citation>
    <scope>NUCLEOTIDE SEQUENCE [LARGE SCALE MRNA]</scope>
</reference>
<reference key="5">
    <citation type="submission" date="2004-06" db="EMBL/GenBank/DDBJ databases">
        <authorList>
            <consortium name="SeattleSNPs variation discovery resource"/>
        </authorList>
    </citation>
    <scope>NUCLEOTIDE SEQUENCE [GENOMIC DNA]</scope>
    <scope>VARIANT ARG-111</scope>
</reference>
<reference key="6">
    <citation type="journal article" date="2005" name="Nature">
        <title>The DNA sequence of the human X chromosome.</title>
        <authorList>
            <person name="Ross M.T."/>
            <person name="Grafham D.V."/>
            <person name="Coffey A.J."/>
            <person name="Scherer S."/>
            <person name="McLay K."/>
            <person name="Muzny D."/>
            <person name="Platzer M."/>
            <person name="Howell G.R."/>
            <person name="Burrows C."/>
            <person name="Bird C.P."/>
            <person name="Frankish A."/>
            <person name="Lovell F.L."/>
            <person name="Howe K.L."/>
            <person name="Ashurst J.L."/>
            <person name="Fulton R.S."/>
            <person name="Sudbrak R."/>
            <person name="Wen G."/>
            <person name="Jones M.C."/>
            <person name="Hurles M.E."/>
            <person name="Andrews T.D."/>
            <person name="Scott C.E."/>
            <person name="Searle S."/>
            <person name="Ramser J."/>
            <person name="Whittaker A."/>
            <person name="Deadman R."/>
            <person name="Carter N.P."/>
            <person name="Hunt S.E."/>
            <person name="Chen R."/>
            <person name="Cree A."/>
            <person name="Gunaratne P."/>
            <person name="Havlak P."/>
            <person name="Hodgson A."/>
            <person name="Metzker M.L."/>
            <person name="Richards S."/>
            <person name="Scott G."/>
            <person name="Steffen D."/>
            <person name="Sodergren E."/>
            <person name="Wheeler D.A."/>
            <person name="Worley K.C."/>
            <person name="Ainscough R."/>
            <person name="Ambrose K.D."/>
            <person name="Ansari-Lari M.A."/>
            <person name="Aradhya S."/>
            <person name="Ashwell R.I."/>
            <person name="Babbage A.K."/>
            <person name="Bagguley C.L."/>
            <person name="Ballabio A."/>
            <person name="Banerjee R."/>
            <person name="Barker G.E."/>
            <person name="Barlow K.F."/>
            <person name="Barrett I.P."/>
            <person name="Bates K.N."/>
            <person name="Beare D.M."/>
            <person name="Beasley H."/>
            <person name="Beasley O."/>
            <person name="Beck A."/>
            <person name="Bethel G."/>
            <person name="Blechschmidt K."/>
            <person name="Brady N."/>
            <person name="Bray-Allen S."/>
            <person name="Bridgeman A.M."/>
            <person name="Brown A.J."/>
            <person name="Brown M.J."/>
            <person name="Bonnin D."/>
            <person name="Bruford E.A."/>
            <person name="Buhay C."/>
            <person name="Burch P."/>
            <person name="Burford D."/>
            <person name="Burgess J."/>
            <person name="Burrill W."/>
            <person name="Burton J."/>
            <person name="Bye J.M."/>
            <person name="Carder C."/>
            <person name="Carrel L."/>
            <person name="Chako J."/>
            <person name="Chapman J.C."/>
            <person name="Chavez D."/>
            <person name="Chen E."/>
            <person name="Chen G."/>
            <person name="Chen Y."/>
            <person name="Chen Z."/>
            <person name="Chinault C."/>
            <person name="Ciccodicola A."/>
            <person name="Clark S.Y."/>
            <person name="Clarke G."/>
            <person name="Clee C.M."/>
            <person name="Clegg S."/>
            <person name="Clerc-Blankenburg K."/>
            <person name="Clifford K."/>
            <person name="Cobley V."/>
            <person name="Cole C.G."/>
            <person name="Conquer J.S."/>
            <person name="Corby N."/>
            <person name="Connor R.E."/>
            <person name="David R."/>
            <person name="Davies J."/>
            <person name="Davis C."/>
            <person name="Davis J."/>
            <person name="Delgado O."/>
            <person name="Deshazo D."/>
            <person name="Dhami P."/>
            <person name="Ding Y."/>
            <person name="Dinh H."/>
            <person name="Dodsworth S."/>
            <person name="Draper H."/>
            <person name="Dugan-Rocha S."/>
            <person name="Dunham A."/>
            <person name="Dunn M."/>
            <person name="Durbin K.J."/>
            <person name="Dutta I."/>
            <person name="Eades T."/>
            <person name="Ellwood M."/>
            <person name="Emery-Cohen A."/>
            <person name="Errington H."/>
            <person name="Evans K.L."/>
            <person name="Faulkner L."/>
            <person name="Francis F."/>
            <person name="Frankland J."/>
            <person name="Fraser A.E."/>
            <person name="Galgoczy P."/>
            <person name="Gilbert J."/>
            <person name="Gill R."/>
            <person name="Gloeckner G."/>
            <person name="Gregory S.G."/>
            <person name="Gribble S."/>
            <person name="Griffiths C."/>
            <person name="Grocock R."/>
            <person name="Gu Y."/>
            <person name="Gwilliam R."/>
            <person name="Hamilton C."/>
            <person name="Hart E.A."/>
            <person name="Hawes A."/>
            <person name="Heath P.D."/>
            <person name="Heitmann K."/>
            <person name="Hennig S."/>
            <person name="Hernandez J."/>
            <person name="Hinzmann B."/>
            <person name="Ho S."/>
            <person name="Hoffs M."/>
            <person name="Howden P.J."/>
            <person name="Huckle E.J."/>
            <person name="Hume J."/>
            <person name="Hunt P.J."/>
            <person name="Hunt A.R."/>
            <person name="Isherwood J."/>
            <person name="Jacob L."/>
            <person name="Johnson D."/>
            <person name="Jones S."/>
            <person name="de Jong P.J."/>
            <person name="Joseph S.S."/>
            <person name="Keenan S."/>
            <person name="Kelly S."/>
            <person name="Kershaw J.K."/>
            <person name="Khan Z."/>
            <person name="Kioschis P."/>
            <person name="Klages S."/>
            <person name="Knights A.J."/>
            <person name="Kosiura A."/>
            <person name="Kovar-Smith C."/>
            <person name="Laird G.K."/>
            <person name="Langford C."/>
            <person name="Lawlor S."/>
            <person name="Leversha M."/>
            <person name="Lewis L."/>
            <person name="Liu W."/>
            <person name="Lloyd C."/>
            <person name="Lloyd D.M."/>
            <person name="Loulseged H."/>
            <person name="Loveland J.E."/>
            <person name="Lovell J.D."/>
            <person name="Lozado R."/>
            <person name="Lu J."/>
            <person name="Lyne R."/>
            <person name="Ma J."/>
            <person name="Maheshwari M."/>
            <person name="Matthews L.H."/>
            <person name="McDowall J."/>
            <person name="McLaren S."/>
            <person name="McMurray A."/>
            <person name="Meidl P."/>
            <person name="Meitinger T."/>
            <person name="Milne S."/>
            <person name="Miner G."/>
            <person name="Mistry S.L."/>
            <person name="Morgan M."/>
            <person name="Morris S."/>
            <person name="Mueller I."/>
            <person name="Mullikin J.C."/>
            <person name="Nguyen N."/>
            <person name="Nordsiek G."/>
            <person name="Nyakatura G."/>
            <person name="O'dell C.N."/>
            <person name="Okwuonu G."/>
            <person name="Palmer S."/>
            <person name="Pandian R."/>
            <person name="Parker D."/>
            <person name="Parrish J."/>
            <person name="Pasternak S."/>
            <person name="Patel D."/>
            <person name="Pearce A.V."/>
            <person name="Pearson D.M."/>
            <person name="Pelan S.E."/>
            <person name="Perez L."/>
            <person name="Porter K.M."/>
            <person name="Ramsey Y."/>
            <person name="Reichwald K."/>
            <person name="Rhodes S."/>
            <person name="Ridler K.A."/>
            <person name="Schlessinger D."/>
            <person name="Schueler M.G."/>
            <person name="Sehra H.K."/>
            <person name="Shaw-Smith C."/>
            <person name="Shen H."/>
            <person name="Sheridan E.M."/>
            <person name="Shownkeen R."/>
            <person name="Skuce C.D."/>
            <person name="Smith M.L."/>
            <person name="Sotheran E.C."/>
            <person name="Steingruber H.E."/>
            <person name="Steward C.A."/>
            <person name="Storey R."/>
            <person name="Swann R.M."/>
            <person name="Swarbreck D."/>
            <person name="Tabor P.E."/>
            <person name="Taudien S."/>
            <person name="Taylor T."/>
            <person name="Teague B."/>
            <person name="Thomas K."/>
            <person name="Thorpe A."/>
            <person name="Timms K."/>
            <person name="Tracey A."/>
            <person name="Trevanion S."/>
            <person name="Tromans A.C."/>
            <person name="d'Urso M."/>
            <person name="Verduzco D."/>
            <person name="Villasana D."/>
            <person name="Waldron L."/>
            <person name="Wall M."/>
            <person name="Wang Q."/>
            <person name="Warren J."/>
            <person name="Warry G.L."/>
            <person name="Wei X."/>
            <person name="West A."/>
            <person name="Whitehead S.L."/>
            <person name="Whiteley M.N."/>
            <person name="Wilkinson J.E."/>
            <person name="Willey D.L."/>
            <person name="Williams G."/>
            <person name="Williams L."/>
            <person name="Williamson A."/>
            <person name="Williamson H."/>
            <person name="Wilming L."/>
            <person name="Woodmansey R.L."/>
            <person name="Wray P.W."/>
            <person name="Yen J."/>
            <person name="Zhang J."/>
            <person name="Zhou J."/>
            <person name="Zoghbi H."/>
            <person name="Zorilla S."/>
            <person name="Buck D."/>
            <person name="Reinhardt R."/>
            <person name="Poustka A."/>
            <person name="Rosenthal A."/>
            <person name="Lehrach H."/>
            <person name="Meindl A."/>
            <person name="Minx P.J."/>
            <person name="Hillier L.W."/>
            <person name="Willard H.F."/>
            <person name="Wilson R.K."/>
            <person name="Waterston R.H."/>
            <person name="Rice C.M."/>
            <person name="Vaudin M."/>
            <person name="Coulson A."/>
            <person name="Nelson D.L."/>
            <person name="Weinstock G."/>
            <person name="Sulston J.E."/>
            <person name="Durbin R.M."/>
            <person name="Hubbard T."/>
            <person name="Gibbs R.A."/>
            <person name="Beck S."/>
            <person name="Rogers J."/>
            <person name="Bentley D.R."/>
        </authorList>
    </citation>
    <scope>NUCLEOTIDE SEQUENCE [LARGE SCALE GENOMIC DNA]</scope>
</reference>
<reference key="7">
    <citation type="journal article" date="2004" name="Genome Res.">
        <title>The status, quality, and expansion of the NIH full-length cDNA project: the Mammalian Gene Collection (MGC).</title>
        <authorList>
            <consortium name="The MGC Project Team"/>
        </authorList>
    </citation>
    <scope>NUCLEOTIDE SEQUENCE [LARGE SCALE MRNA]</scope>
    <source>
        <tissue>Lung</tissue>
        <tissue>Prostate</tissue>
    </source>
</reference>
<reference key="8">
    <citation type="journal article" date="2002" name="Cancer Res.">
        <title>IL-13R(alpha)2, a decoy receptor for IL-13 acts as an inhibitor of IL-4-dependent signal transduction in glioblastoma cells.</title>
        <authorList>
            <person name="Rahaman S.O."/>
            <person name="Sharma P."/>
            <person name="Harbor P.C."/>
            <person name="Aman M.J."/>
            <person name="Vogelbaum M.A."/>
            <person name="Haque S.J."/>
        </authorList>
    </citation>
    <scope>FUNCTION</scope>
    <scope>DOMAIN</scope>
</reference>
<reference key="9">
    <citation type="journal article" date="2006" name="J. Allergy Clin. Immunol.">
        <title>IL-13 receptor alpha 2: a regulator of IL-13 and IL-4 signal transduction in primary human fibroblasts.</title>
        <authorList>
            <person name="Andrews A.L."/>
            <person name="Nasir T."/>
            <person name="Bucchieri F."/>
            <person name="Holloway J.W."/>
            <person name="Holgate S.T."/>
            <person name="Davies D.E."/>
        </authorList>
    </citation>
    <scope>FUNCTION</scope>
    <scope>INTERACTION WITH IL4RA</scope>
</reference>
<reference key="10">
    <citation type="journal article" date="2006" name="Nat. Med.">
        <title>IL-13 signaling through the IL-13alpha2 receptor is involved in induction of TGF-beta1 production and fibrosis.</title>
        <authorList>
            <person name="Fichtner-Feigl S."/>
            <person name="Strober W."/>
            <person name="Kawakami K."/>
            <person name="Puri R.K."/>
            <person name="Kitani A."/>
        </authorList>
    </citation>
    <scope>FUNCTION</scope>
    <scope>INDUCTION BY STAT6 AND NF-KAPPA-B</scope>
</reference>
<reference key="11">
    <citation type="journal article" date="2008" name="J. Allergy Clin. Immunol.">
        <title>Matrix metalloproteinase 8 contributes to solubilization of IL-13 receptor alpha2 in vivo.</title>
        <authorList>
            <person name="Chen W."/>
            <person name="Tabata Y."/>
            <person name="Gibson A.M."/>
            <person name="Daines M.O."/>
            <person name="Warrier M.R."/>
            <person name="Wills-Karp M."/>
            <person name="Hershey G.K."/>
        </authorList>
    </citation>
    <scope>CLEAVAGE BY MMP8</scope>
    <scope>SUBCELLULAR LOCATION</scope>
</reference>
<reference key="12">
    <citation type="journal article" date="2010" name="Structure">
        <title>Molecular basis for shared cytokine recognition revealed in the structure of an unusually high affinity complex between IL-13 and IL-13Ralpha2.</title>
        <authorList>
            <person name="Lupardus P.J."/>
            <person name="Birnbaum M.E."/>
            <person name="Garcia K.C."/>
        </authorList>
    </citation>
    <scope>X-RAY CRYSTALLOGRAPHY (3.05 ANGSTROMS) IN COMPLEX WITH IL13</scope>
    <scope>FUNCTION</scope>
    <scope>DISULFIDE BONDS</scope>
    <scope>GLYCOSYLATION AT ASN-215</scope>
</reference>
<protein>
    <recommendedName>
        <fullName>Interleukin-13 receptor subunit alpha-2</fullName>
        <shortName>IL-13 receptor subunit alpha-2</shortName>
        <shortName>IL-13R subunit alpha-2</shortName>
        <shortName>IL-13R-alpha-2</shortName>
        <shortName>IL-13RA2</shortName>
    </recommendedName>
    <alternativeName>
        <fullName>Interleukin-13-binding protein</fullName>
    </alternativeName>
    <cdAntigenName>CD213a2</cdAntigenName>
</protein>
<evidence type="ECO:0000255" key="1"/>
<evidence type="ECO:0000255" key="2">
    <source>
        <dbReference type="PROSITE-ProRule" id="PRU00316"/>
    </source>
</evidence>
<evidence type="ECO:0000269" key="3">
    <source>
    </source>
</evidence>
<evidence type="ECO:0000269" key="4">
    <source>
    </source>
</evidence>
<evidence type="ECO:0000269" key="5">
    <source>
    </source>
</evidence>
<evidence type="ECO:0000269" key="6">
    <source>
    </source>
</evidence>
<evidence type="ECO:0000269" key="7">
    <source>
    </source>
</evidence>
<evidence type="ECO:0000269" key="8">
    <source ref="5"/>
</evidence>
<evidence type="ECO:0000305" key="9"/>
<evidence type="ECO:0007829" key="10">
    <source>
        <dbReference type="PDB" id="3LB6"/>
    </source>
</evidence>
<name>I13R2_HUMAN</name>
<sequence>MAFVCLAIGCLYTFLISTTFGCTSSSDTEIKVNPPQDFEIVDPGYLGYLYLQWQPPLSLDHFKECTVEYELKYRNIGSETWKTIITKNLHYKDGFDLNKGIEAKIHTLLPWQCTNGSEVQSSWAETTYWISPQGIPETKVQDMDCVYYNWQYLLCSWKPGIGVLLDTNYNLFYWYEGLDHALQCVDYIKADGQNIGCRFPYLEASDYKDFYICVNGSSENKPIRSSYFTFQLQNIVKPLPPVYLTFTRESSCEIKLKWSIPLGPIPARCFDYEIEIREDDTTLVTATVENETYTLKTTNETRQLCFVVRSKVNIYCSDDGIWSEWSDKQCWEGEDLSKKTLLRFWLPFGFILILVIFVTGLLLRKPNTYPKMIPEFFCDT</sequence>
<feature type="signal peptide" evidence="1">
    <location>
        <begin position="1"/>
        <end position="26"/>
    </location>
</feature>
<feature type="chain" id="PRO_0000010942" description="Interleukin-13 receptor subunit alpha-2">
    <location>
        <begin position="27"/>
        <end position="380"/>
    </location>
</feature>
<feature type="topological domain" description="Extracellular" evidence="1">
    <location>
        <begin position="27"/>
        <end position="343"/>
    </location>
</feature>
<feature type="transmembrane region" description="Helical" evidence="1">
    <location>
        <begin position="344"/>
        <end position="363"/>
    </location>
</feature>
<feature type="topological domain" description="Cytoplasmic" evidence="1">
    <location>
        <begin position="364"/>
        <end position="380"/>
    </location>
</feature>
<feature type="domain" description="Fibronectin type-III 1" evidence="2">
    <location>
        <begin position="34"/>
        <end position="134"/>
    </location>
</feature>
<feature type="domain" description="Fibronectin type-III 2" evidence="2">
    <location>
        <begin position="139"/>
        <end position="235"/>
    </location>
</feature>
<feature type="domain" description="Fibronectin type-III 3" evidence="2">
    <location>
        <begin position="240"/>
        <end position="333"/>
    </location>
</feature>
<feature type="short sequence motif" description="WSXWS motif">
    <location>
        <begin position="322"/>
        <end position="326"/>
    </location>
</feature>
<feature type="glycosylation site" description="N-linked (GlcNAc...) asparagine" evidence="1">
    <location>
        <position position="115"/>
    </location>
</feature>
<feature type="glycosylation site" description="N-linked (GlcNAc...) asparagine" evidence="7">
    <location>
        <position position="215"/>
    </location>
</feature>
<feature type="glycosylation site" description="N-linked (GlcNAc...) asparagine" evidence="1">
    <location>
        <position position="290"/>
    </location>
</feature>
<feature type="glycosylation site" description="N-linked (GlcNAc...) asparagine" evidence="1">
    <location>
        <position position="299"/>
    </location>
</feature>
<feature type="disulfide bond" evidence="7">
    <location>
        <begin position="65"/>
        <end position="113"/>
    </location>
</feature>
<feature type="disulfide bond" evidence="7">
    <location>
        <begin position="145"/>
        <end position="155"/>
    </location>
</feature>
<feature type="disulfide bond" evidence="7">
    <location>
        <begin position="184"/>
        <end position="197"/>
    </location>
</feature>
<feature type="disulfide bond" evidence="7">
    <location>
        <begin position="269"/>
        <end position="316"/>
    </location>
</feature>
<feature type="sequence variant" id="VAR_021256" description="In dbSNP:rs17095919." evidence="8">
    <original>W</original>
    <variation>R</variation>
    <location>
        <position position="111"/>
    </location>
</feature>
<feature type="sequence conflict" description="In Ref. 4; BAF84646." evidence="9" ref="4">
    <original>I</original>
    <variation>V</variation>
    <location>
        <position position="8"/>
    </location>
</feature>
<feature type="sequence conflict" description="In Ref. 4; BAF84646." evidence="9" ref="4">
    <original>Q</original>
    <variation>R</variation>
    <location>
        <position position="151"/>
    </location>
</feature>
<feature type="strand" evidence="10">
    <location>
        <begin position="36"/>
        <end position="41"/>
    </location>
</feature>
<feature type="strand" evidence="10">
    <location>
        <begin position="44"/>
        <end position="54"/>
    </location>
</feature>
<feature type="strand" evidence="10">
    <location>
        <begin position="68"/>
        <end position="75"/>
    </location>
</feature>
<feature type="strand" evidence="10">
    <location>
        <begin position="82"/>
        <end position="94"/>
    </location>
</feature>
<feature type="strand" evidence="10">
    <location>
        <begin position="101"/>
        <end position="108"/>
    </location>
</feature>
<feature type="helix" evidence="10">
    <location>
        <begin position="111"/>
        <end position="114"/>
    </location>
</feature>
<feature type="strand" evidence="10">
    <location>
        <begin position="115"/>
        <end position="117"/>
    </location>
</feature>
<feature type="strand" evidence="10">
    <location>
        <begin position="126"/>
        <end position="128"/>
    </location>
</feature>
<feature type="strand" evidence="10">
    <location>
        <begin position="141"/>
        <end position="148"/>
    </location>
</feature>
<feature type="turn" evidence="10">
    <location>
        <begin position="149"/>
        <end position="151"/>
    </location>
</feature>
<feature type="strand" evidence="10">
    <location>
        <begin position="152"/>
        <end position="158"/>
    </location>
</feature>
<feature type="strand" evidence="10">
    <location>
        <begin position="168"/>
        <end position="174"/>
    </location>
</feature>
<feature type="strand" evidence="10">
    <location>
        <begin position="185"/>
        <end position="189"/>
    </location>
</feature>
<feature type="strand" evidence="10">
    <location>
        <begin position="194"/>
        <end position="198"/>
    </location>
</feature>
<feature type="strand" evidence="10">
    <location>
        <begin position="206"/>
        <end position="208"/>
    </location>
</feature>
<feature type="strand" evidence="10">
    <location>
        <begin position="210"/>
        <end position="217"/>
    </location>
</feature>
<feature type="strand" evidence="10">
    <location>
        <begin position="226"/>
        <end position="230"/>
    </location>
</feature>
<feature type="helix" evidence="10">
    <location>
        <begin position="232"/>
        <end position="234"/>
    </location>
</feature>
<feature type="strand" evidence="10">
    <location>
        <begin position="235"/>
        <end position="237"/>
    </location>
</feature>
<feature type="strand" evidence="10">
    <location>
        <begin position="242"/>
        <end position="246"/>
    </location>
</feature>
<feature type="strand" evidence="10">
    <location>
        <begin position="256"/>
        <end position="259"/>
    </location>
</feature>
<feature type="strand" evidence="10">
    <location>
        <begin position="262"/>
        <end position="264"/>
    </location>
</feature>
<feature type="strand" evidence="10">
    <location>
        <begin position="270"/>
        <end position="274"/>
    </location>
</feature>
<feature type="strand" evidence="10">
    <location>
        <begin position="287"/>
        <end position="291"/>
    </location>
</feature>
<feature type="strand" evidence="10">
    <location>
        <begin position="308"/>
        <end position="312"/>
    </location>
</feature>
<feature type="turn" evidence="10">
    <location>
        <begin position="314"/>
        <end position="316"/>
    </location>
</feature>
<organism>
    <name type="scientific">Homo sapiens</name>
    <name type="common">Human</name>
    <dbReference type="NCBI Taxonomy" id="9606"/>
    <lineage>
        <taxon>Eukaryota</taxon>
        <taxon>Metazoa</taxon>
        <taxon>Chordata</taxon>
        <taxon>Craniata</taxon>
        <taxon>Vertebrata</taxon>
        <taxon>Euteleostomi</taxon>
        <taxon>Mammalia</taxon>
        <taxon>Eutheria</taxon>
        <taxon>Euarchontoglires</taxon>
        <taxon>Primates</taxon>
        <taxon>Haplorrhini</taxon>
        <taxon>Catarrhini</taxon>
        <taxon>Hominidae</taxon>
        <taxon>Homo</taxon>
    </lineage>
</organism>
<keyword id="KW-0002">3D-structure</keyword>
<keyword id="KW-1003">Cell membrane</keyword>
<keyword id="KW-1015">Disulfide bond</keyword>
<keyword id="KW-0325">Glycoprotein</keyword>
<keyword id="KW-0472">Membrane</keyword>
<keyword id="KW-1267">Proteomics identification</keyword>
<keyword id="KW-0675">Receptor</keyword>
<keyword id="KW-1185">Reference proteome</keyword>
<keyword id="KW-0677">Repeat</keyword>
<keyword id="KW-0732">Signal</keyword>
<keyword id="KW-0812">Transmembrane</keyword>
<keyword id="KW-1133">Transmembrane helix</keyword>
<accession>Q14627</accession>
<accession>A8K7E2</accession>
<accession>O00667</accession>
<dbReference type="EMBL" id="X95302">
    <property type="protein sequence ID" value="CAA64617.1"/>
    <property type="molecule type" value="mRNA"/>
</dbReference>
<dbReference type="EMBL" id="U70981">
    <property type="protein sequence ID" value="AAB17170.1"/>
    <property type="molecule type" value="mRNA"/>
</dbReference>
<dbReference type="EMBL" id="Y08768">
    <property type="protein sequence ID" value="CAA70021.1"/>
    <property type="molecule type" value="mRNA"/>
</dbReference>
<dbReference type="EMBL" id="AK291957">
    <property type="protein sequence ID" value="BAF84646.1"/>
    <property type="molecule type" value="mRNA"/>
</dbReference>
<dbReference type="EMBL" id="AY656702">
    <property type="protein sequence ID" value="AAT49099.1"/>
    <property type="molecule type" value="Genomic_DNA"/>
</dbReference>
<dbReference type="EMBL" id="AL121878">
    <property type="status" value="NOT_ANNOTATED_CDS"/>
    <property type="molecule type" value="Genomic_DNA"/>
</dbReference>
<dbReference type="EMBL" id="BC020739">
    <property type="protein sequence ID" value="AAH20739.1"/>
    <property type="molecule type" value="mRNA"/>
</dbReference>
<dbReference type="EMBL" id="BC033705">
    <property type="protein sequence ID" value="AAH33705.1"/>
    <property type="molecule type" value="mRNA"/>
</dbReference>
<dbReference type="CCDS" id="CCDS14565.1"/>
<dbReference type="RefSeq" id="NP_000631.1">
    <property type="nucleotide sequence ID" value="NM_000640.3"/>
</dbReference>
<dbReference type="RefSeq" id="XP_054183007.1">
    <property type="nucleotide sequence ID" value="XM_054327032.1"/>
</dbReference>
<dbReference type="RefSeq" id="XP_054183008.1">
    <property type="nucleotide sequence ID" value="XM_054327033.1"/>
</dbReference>
<dbReference type="PDB" id="3LB6">
    <property type="method" value="X-ray"/>
    <property type="resolution" value="3.05 A"/>
    <property type="chains" value="C/D=1-380"/>
</dbReference>
<dbReference type="PDBsum" id="3LB6"/>
<dbReference type="SMR" id="Q14627"/>
<dbReference type="BioGRID" id="109812">
    <property type="interactions" value="134"/>
</dbReference>
<dbReference type="ComplexPortal" id="CPX-847">
    <property type="entry name" value="TMEM219-Interleukin-13 decoy-receptor-ligand alpha 2 complex"/>
</dbReference>
<dbReference type="ComplexPortal" id="CPX-9184">
    <property type="entry name" value="Chitinase 3-like-1-tmem219-interleukin-13 receptor-ligand alpha-2 signalling complex"/>
</dbReference>
<dbReference type="CORUM" id="Q14627"/>
<dbReference type="DIP" id="DIP-3340N"/>
<dbReference type="FunCoup" id="Q14627">
    <property type="interactions" value="486"/>
</dbReference>
<dbReference type="IntAct" id="Q14627">
    <property type="interactions" value="131"/>
</dbReference>
<dbReference type="MINT" id="Q14627"/>
<dbReference type="STRING" id="9606.ENSP00000361004"/>
<dbReference type="ChEMBL" id="CHEMBL3713941"/>
<dbReference type="DrugBank" id="DB05078">
    <property type="generic name" value="AER001"/>
</dbReference>
<dbReference type="GlyCosmos" id="Q14627">
    <property type="glycosylation" value="4 sites, No reported glycans"/>
</dbReference>
<dbReference type="GlyGen" id="Q14627">
    <property type="glycosylation" value="4 sites"/>
</dbReference>
<dbReference type="iPTMnet" id="Q14627"/>
<dbReference type="BioMuta" id="IL13RA2"/>
<dbReference type="DMDM" id="2494720"/>
<dbReference type="jPOST" id="Q14627"/>
<dbReference type="MassIVE" id="Q14627"/>
<dbReference type="PaxDb" id="9606-ENSP00000361004"/>
<dbReference type="PeptideAtlas" id="Q14627"/>
<dbReference type="ProteomicsDB" id="60078"/>
<dbReference type="ABCD" id="Q14627">
    <property type="antibodies" value="2 sequenced antibodies"/>
</dbReference>
<dbReference type="Antibodypedia" id="29593">
    <property type="antibodies" value="644 antibodies from 39 providers"/>
</dbReference>
<dbReference type="DNASU" id="3598"/>
<dbReference type="Ensembl" id="ENST00000243213.2">
    <property type="protein sequence ID" value="ENSP00000243213.1"/>
    <property type="gene ID" value="ENSG00000123496.8"/>
</dbReference>
<dbReference type="Ensembl" id="ENST00000371936.5">
    <property type="protein sequence ID" value="ENSP00000361004.1"/>
    <property type="gene ID" value="ENSG00000123496.8"/>
</dbReference>
<dbReference type="GeneID" id="3598"/>
<dbReference type="KEGG" id="hsa:3598"/>
<dbReference type="MANE-Select" id="ENST00000243213.2">
    <property type="protein sequence ID" value="ENSP00000243213.1"/>
    <property type="RefSeq nucleotide sequence ID" value="NM_000640.3"/>
    <property type="RefSeq protein sequence ID" value="NP_000631.1"/>
</dbReference>
<dbReference type="UCSC" id="uc004epx.4">
    <property type="organism name" value="human"/>
</dbReference>
<dbReference type="AGR" id="HGNC:5975"/>
<dbReference type="CTD" id="3598"/>
<dbReference type="DisGeNET" id="3598"/>
<dbReference type="GeneCards" id="IL13RA2"/>
<dbReference type="HGNC" id="HGNC:5975">
    <property type="gene designation" value="IL13RA2"/>
</dbReference>
<dbReference type="HPA" id="ENSG00000123496">
    <property type="expression patterns" value="Tissue enhanced (testis)"/>
</dbReference>
<dbReference type="MIM" id="300130">
    <property type="type" value="gene"/>
</dbReference>
<dbReference type="neXtProt" id="NX_Q14627"/>
<dbReference type="OpenTargets" id="ENSG00000123496"/>
<dbReference type="PharmGKB" id="PA29788"/>
<dbReference type="VEuPathDB" id="HostDB:ENSG00000123496"/>
<dbReference type="eggNOG" id="ENOG502RV4W">
    <property type="taxonomic scope" value="Eukaryota"/>
</dbReference>
<dbReference type="GeneTree" id="ENSGT00940000159971"/>
<dbReference type="HOGENOM" id="CLU_054773_1_0_1"/>
<dbReference type="InParanoid" id="Q14627"/>
<dbReference type="OMA" id="GPIPSQC"/>
<dbReference type="OrthoDB" id="9826641at2759"/>
<dbReference type="PAN-GO" id="Q14627">
    <property type="GO annotations" value="5 GO annotations based on evolutionary models"/>
</dbReference>
<dbReference type="PhylomeDB" id="Q14627"/>
<dbReference type="TreeFam" id="TF331549"/>
<dbReference type="PathwayCommons" id="Q14627"/>
<dbReference type="Reactome" id="R-HSA-6785807">
    <property type="pathway name" value="Interleukin-4 and Interleukin-13 signaling"/>
</dbReference>
<dbReference type="SignaLink" id="Q14627"/>
<dbReference type="BioGRID-ORCS" id="3598">
    <property type="hits" value="11 hits in 775 CRISPR screens"/>
</dbReference>
<dbReference type="ChiTaRS" id="IL13RA2">
    <property type="organism name" value="human"/>
</dbReference>
<dbReference type="EvolutionaryTrace" id="Q14627"/>
<dbReference type="GeneWiki" id="IL13RA2"/>
<dbReference type="GenomeRNAi" id="3598"/>
<dbReference type="Pharos" id="Q14627">
    <property type="development level" value="Tbio"/>
</dbReference>
<dbReference type="PRO" id="PR:Q14627"/>
<dbReference type="Proteomes" id="UP000005640">
    <property type="component" value="Chromosome X"/>
</dbReference>
<dbReference type="RNAct" id="Q14627">
    <property type="molecule type" value="protein"/>
</dbReference>
<dbReference type="Bgee" id="ENSG00000123496">
    <property type="expression patterns" value="Expressed in sperm and 116 other cell types or tissues"/>
</dbReference>
<dbReference type="GO" id="GO:0009897">
    <property type="term" value="C:external side of plasma membrane"/>
    <property type="evidence" value="ECO:0000318"/>
    <property type="project" value="GO_Central"/>
</dbReference>
<dbReference type="GO" id="GO:0005576">
    <property type="term" value="C:extracellular region"/>
    <property type="evidence" value="ECO:0000304"/>
    <property type="project" value="Reactome"/>
</dbReference>
<dbReference type="GO" id="GO:0005615">
    <property type="term" value="C:extracellular space"/>
    <property type="evidence" value="ECO:0000304"/>
    <property type="project" value="ProtInc"/>
</dbReference>
<dbReference type="GO" id="GO:0005886">
    <property type="term" value="C:plasma membrane"/>
    <property type="evidence" value="ECO:0000314"/>
    <property type="project" value="UniProt"/>
</dbReference>
<dbReference type="GO" id="GO:0043235">
    <property type="term" value="C:receptor complex"/>
    <property type="evidence" value="ECO:0000318"/>
    <property type="project" value="GO_Central"/>
</dbReference>
<dbReference type="GO" id="GO:0019955">
    <property type="term" value="F:cytokine binding"/>
    <property type="evidence" value="ECO:0000318"/>
    <property type="project" value="GO_Central"/>
</dbReference>
<dbReference type="GO" id="GO:0004896">
    <property type="term" value="F:cytokine receptor activity"/>
    <property type="evidence" value="ECO:0000314"/>
    <property type="project" value="UniProt"/>
</dbReference>
<dbReference type="GO" id="GO:0019221">
    <property type="term" value="P:cytokine-mediated signaling pathway"/>
    <property type="evidence" value="ECO:0000318"/>
    <property type="project" value="GO_Central"/>
</dbReference>
<dbReference type="GO" id="GO:0016064">
    <property type="term" value="P:immunoglobulin mediated immune response"/>
    <property type="evidence" value="ECO:0007669"/>
    <property type="project" value="Ensembl"/>
</dbReference>
<dbReference type="GO" id="GO:0035772">
    <property type="term" value="P:interleukin-13-mediated signaling pathway"/>
    <property type="evidence" value="ECO:0000314"/>
    <property type="project" value="UniProt"/>
</dbReference>
<dbReference type="GO" id="GO:0002638">
    <property type="term" value="P:negative regulation of immunoglobulin production"/>
    <property type="evidence" value="ECO:0007669"/>
    <property type="project" value="Ensembl"/>
</dbReference>
<dbReference type="GO" id="GO:0043305">
    <property type="term" value="P:negative regulation of mast cell degranulation"/>
    <property type="evidence" value="ECO:0007669"/>
    <property type="project" value="Ensembl"/>
</dbReference>
<dbReference type="GO" id="GO:0008284">
    <property type="term" value="P:positive regulation of cell population proliferation"/>
    <property type="evidence" value="ECO:0000318"/>
    <property type="project" value="GO_Central"/>
</dbReference>
<dbReference type="FunFam" id="2.60.40.10:FF:001186">
    <property type="entry name" value="Interleukin 13 receptor subunit alpha 2"/>
    <property type="match status" value="1"/>
</dbReference>
<dbReference type="FunFam" id="2.60.40.10:FF:001396">
    <property type="entry name" value="Interleukin 13 receptor subunit alpha 2"/>
    <property type="match status" value="1"/>
</dbReference>
<dbReference type="FunFam" id="2.60.40.10:FF:000958">
    <property type="entry name" value="Interleukin-13 receptor subunit alpha-2"/>
    <property type="match status" value="1"/>
</dbReference>
<dbReference type="Gene3D" id="2.60.40.10">
    <property type="entry name" value="Immunoglobulins"/>
    <property type="match status" value="3"/>
</dbReference>
<dbReference type="InterPro" id="IPR003961">
    <property type="entry name" value="FN3_dom"/>
</dbReference>
<dbReference type="InterPro" id="IPR036116">
    <property type="entry name" value="FN3_sf"/>
</dbReference>
<dbReference type="InterPro" id="IPR013783">
    <property type="entry name" value="Ig-like_fold"/>
</dbReference>
<dbReference type="InterPro" id="IPR003532">
    <property type="entry name" value="Short_hematopoietin_rcpt_2_CS"/>
</dbReference>
<dbReference type="InterPro" id="IPR015321">
    <property type="entry name" value="TypeI_recpt_CBD"/>
</dbReference>
<dbReference type="PANTHER" id="PTHR23037">
    <property type="entry name" value="CYTOKINE RECEPTOR"/>
    <property type="match status" value="1"/>
</dbReference>
<dbReference type="PANTHER" id="PTHR23037:SF45">
    <property type="entry name" value="INTERLEUKIN 13 RECEPTOR SUBUNIT ALPHA 2"/>
    <property type="match status" value="1"/>
</dbReference>
<dbReference type="Pfam" id="PF09240">
    <property type="entry name" value="IL6Ra-bind"/>
    <property type="match status" value="1"/>
</dbReference>
<dbReference type="SUPFAM" id="SSF49265">
    <property type="entry name" value="Fibronectin type III"/>
    <property type="match status" value="3"/>
</dbReference>
<dbReference type="PROSITE" id="PS50853">
    <property type="entry name" value="FN3"/>
    <property type="match status" value="3"/>
</dbReference>
<dbReference type="PROSITE" id="PS01356">
    <property type="entry name" value="HEMATOPO_REC_S_F2"/>
    <property type="match status" value="1"/>
</dbReference>
<comment type="function">
    <text evidence="3 4 5 7">Cell surface receptor that plays a role in the regulation of IL-13-mediated responses (PubMed:11861389, PubMed:17030238). Functions as a decoy receptor that inhibits IL-13- and IL-4-mediated signal transduction via the JAK-STAT pathway and thereby modulates immune responses and inflammation (PubMed:11861389, PubMed:17030238). Serves as a functional signaling receptor for IL-13 in an alternative pathway involving AP-1 ultimately leading to the production of TGFB1 (PubMed:16327802).</text>
</comment>
<comment type="subunit">
    <text evidence="5 7">Interacts with IL4RA (PubMed:17030238). Interacts with high affinity to interleukin-13 (IL13), but not to interleukin-4 (IL4) (PubMed:20223216).</text>
</comment>
<comment type="interaction">
    <interactant intactId="EBI-4320063">
        <id>Q14627</id>
    </interactant>
    <interactant intactId="EBI-6917454">
        <id>P36222</id>
        <label>CHI3L1</label>
    </interactant>
    <organismsDiffer>false</organismsDiffer>
    <experiments>9</experiments>
</comment>
<comment type="interaction">
    <interactant intactId="EBI-4320063">
        <id>Q14627</id>
    </interactant>
    <interactant intactId="EBI-1647828">
        <id>P35225</id>
        <label>IL13</label>
    </interactant>
    <organismsDiffer>false</organismsDiffer>
    <experiments>9</experiments>
</comment>
<comment type="interaction">
    <interactant intactId="EBI-4320063">
        <id>Q14627</id>
    </interactant>
    <interactant intactId="EBI-1170392">
        <id>P17931</id>
        <label>LGALS3</label>
    </interactant>
    <organismsDiffer>false</organismsDiffer>
    <experiments>2</experiments>
</comment>
<comment type="interaction">
    <interactant intactId="EBI-4320063">
        <id>Q14627</id>
    </interactant>
    <interactant intactId="EBI-11721828">
        <id>Q8IY26</id>
        <label>PLPP6</label>
    </interactant>
    <organismsDiffer>false</organismsDiffer>
    <experiments>3</experiments>
</comment>
<comment type="interaction">
    <interactant intactId="EBI-4320063">
        <id>Q14627</id>
    </interactant>
    <interactant intactId="EBI-20264080">
        <id>Q86XT9</id>
        <label>TMEM219</label>
    </interactant>
    <organismsDiffer>false</organismsDiffer>
    <experiments>9</experiments>
</comment>
<comment type="subcellular location">
    <subcellularLocation>
        <location evidence="6">Cell membrane</location>
        <topology>Single-pass type I membrane protein</topology>
    </subcellularLocation>
</comment>
<comment type="induction">
    <text evidence="4">Expression is induced by STAT6 and NF-kappa-B.</text>
</comment>
<comment type="domain">
    <text evidence="3">The WSXWS motif appears to be necessary for proper protein folding and thereby efficient intracellular transport and cell-surface receptor binding. The cytoplasmic domain functions as an inhibitor of IL-4 or IL-13-dependent activation of the Jak-Stat pathway (PubMed:11861389).</text>
</comment>
<comment type="PTM">
    <text evidence="6">Cleaved by MMP8 leading to a soluble form that is also able to interact with IL13.</text>
</comment>
<comment type="similarity">
    <text evidence="9">Belongs to the type I cytokine receptor family. Type 5 subfamily.</text>
</comment>
<gene>
    <name type="primary">IL13RA2</name>
    <name type="synonym">IL13R</name>
</gene>
<proteinExistence type="evidence at protein level"/>